<protein>
    <recommendedName>
        <fullName evidence="4">Conotoxin Lt9a</fullName>
    </recommendedName>
</protein>
<feature type="signal peptide" evidence="2">
    <location>
        <begin position="1"/>
        <end position="23"/>
    </location>
</feature>
<feature type="propeptide" id="PRO_0000315520" evidence="5">
    <location>
        <begin position="24"/>
        <end position="40"/>
    </location>
</feature>
<feature type="peptide" id="PRO_0000315521" description="Conotoxin Lt9a" evidence="5">
    <location>
        <begin position="43"/>
        <end position="73"/>
    </location>
</feature>
<feature type="disulfide bond" evidence="1">
    <location>
        <begin position="48"/>
        <end position="62"/>
    </location>
</feature>
<feature type="disulfide bond" evidence="1">
    <location>
        <begin position="53"/>
        <end position="64"/>
    </location>
</feature>
<feature type="disulfide bond" evidence="1">
    <location>
        <begin position="59"/>
        <end position="69"/>
    </location>
</feature>
<feature type="sequence variant">
    <original>S</original>
    <variation>R</variation>
    <location>
        <position position="44"/>
    </location>
</feature>
<feature type="sequence variant">
    <original>T</original>
    <variation>A</variation>
    <location>
        <position position="55"/>
    </location>
</feature>
<comment type="function">
    <text evidence="4">Probable neurotoxin that inhibits ion channels.</text>
</comment>
<comment type="subcellular location">
    <subcellularLocation>
        <location evidence="3">Secreted</location>
    </subcellularLocation>
</comment>
<comment type="tissue specificity">
    <text evidence="5">Expressed by the venom duct.</text>
</comment>
<comment type="domain">
    <text evidence="4">The cysteine framework is IX (C-C-C-C-C-C).</text>
</comment>
<comment type="similarity">
    <text evidence="4">Belongs to the conotoxin P superfamily.</text>
</comment>
<reference key="1">
    <citation type="journal article" date="2006" name="Genomics">
        <title>Diversity and evolution of conotoxins based on gene expression profiling of Conus litteratus.</title>
        <authorList>
            <person name="Pi C."/>
            <person name="Liu J."/>
            <person name="Peng C."/>
            <person name="Liu Y."/>
            <person name="Jiang X."/>
            <person name="Zhao Y."/>
            <person name="Tang S."/>
            <person name="Wang L."/>
            <person name="Dong M."/>
            <person name="Chen S."/>
            <person name="Xu A."/>
        </authorList>
    </citation>
    <scope>NUCLEOTIDE SEQUENCE [MRNA]</scope>
    <scope>PARTIAL PROTEIN SEQUENCE</scope>
    <scope>IDENTIFICATION BY MASS SPECTROMETRY</scope>
    <scope>SUBCELLULAR LOCATION</scope>
    <source>
        <tissue>Venom</tissue>
        <tissue>Venom duct</tissue>
    </source>
</reference>
<dbReference type="EMBL" id="DQ345386">
    <property type="protein sequence ID" value="ABC74994.1"/>
    <property type="molecule type" value="mRNA"/>
</dbReference>
<dbReference type="EMBL" id="DQ345387">
    <property type="protein sequence ID" value="ABC74995.1"/>
    <property type="molecule type" value="mRNA"/>
</dbReference>
<dbReference type="EMBL" id="DQ345388">
    <property type="protein sequence ID" value="ABC74996.1"/>
    <property type="molecule type" value="mRNA"/>
</dbReference>
<dbReference type="SMR" id="Q2I2P4"/>
<dbReference type="TCDB" id="8.B.22.1.4">
    <property type="family name" value="the p-conotoxin cystine knot (p-cck) family"/>
</dbReference>
<dbReference type="ConoServer" id="1174">
    <property type="toxin name" value="Lt9a variant 2 precursor"/>
</dbReference>
<dbReference type="GO" id="GO:0005576">
    <property type="term" value="C:extracellular region"/>
    <property type="evidence" value="ECO:0007669"/>
    <property type="project" value="UniProtKB-SubCell"/>
</dbReference>
<dbReference type="GO" id="GO:0099106">
    <property type="term" value="F:ion channel regulator activity"/>
    <property type="evidence" value="ECO:0007669"/>
    <property type="project" value="UniProtKB-KW"/>
</dbReference>
<dbReference type="GO" id="GO:0090729">
    <property type="term" value="F:toxin activity"/>
    <property type="evidence" value="ECO:0007669"/>
    <property type="project" value="UniProtKB-KW"/>
</dbReference>
<keyword id="KW-0165">Cleavage on pair of basic residues</keyword>
<keyword id="KW-0903">Direct protein sequencing</keyword>
<keyword id="KW-1015">Disulfide bond</keyword>
<keyword id="KW-0872">Ion channel impairing toxin</keyword>
<keyword id="KW-0528">Neurotoxin</keyword>
<keyword id="KW-0964">Secreted</keyword>
<keyword id="KW-0732">Signal</keyword>
<keyword id="KW-0800">Toxin</keyword>
<organism>
    <name type="scientific">Conus litteratus</name>
    <name type="common">Lettered cone</name>
    <dbReference type="NCBI Taxonomy" id="89445"/>
    <lineage>
        <taxon>Eukaryota</taxon>
        <taxon>Metazoa</taxon>
        <taxon>Spiralia</taxon>
        <taxon>Lophotrochozoa</taxon>
        <taxon>Mollusca</taxon>
        <taxon>Gastropoda</taxon>
        <taxon>Caenogastropoda</taxon>
        <taxon>Neogastropoda</taxon>
        <taxon>Conoidea</taxon>
        <taxon>Conidae</taxon>
        <taxon>Conus</taxon>
        <taxon>Elisaconus</taxon>
    </lineage>
</organism>
<proteinExistence type="evidence at protein level"/>
<accession>Q2I2P4</accession>
<accession>Q2I2P5</accession>
<accession>Q2I2P6</accession>
<name>CP9A_CONLT</name>
<sequence>MTLTKSAVLILVLLLAFDNFADVQPGLITMGGGRLSNLLSKRVSIWFCASRTCSTPADCNPCTCESGVCVDWL</sequence>
<evidence type="ECO:0000250" key="1">
    <source>
        <dbReference type="UniProtKB" id="Q9GU57"/>
    </source>
</evidence>
<evidence type="ECO:0000255" key="2"/>
<evidence type="ECO:0000269" key="3">
    <source>
    </source>
</evidence>
<evidence type="ECO:0000305" key="4"/>
<evidence type="ECO:0000305" key="5">
    <source>
    </source>
</evidence>